<comment type="function">
    <text evidence="1">Binds together with bS18 to 16S ribosomal RNA.</text>
</comment>
<comment type="subcellular location">
    <subcellularLocation>
        <location>Plastid</location>
        <location>Cyanelle</location>
    </subcellularLocation>
</comment>
<comment type="similarity">
    <text evidence="2">Belongs to the bacterial ribosomal protein bS6 family.</text>
</comment>
<name>RR6_CYAPA</name>
<protein>
    <recommendedName>
        <fullName evidence="2">Small ribosomal subunit protein bS6c</fullName>
    </recommendedName>
    <alternativeName>
        <fullName>30S ribosomal protein S6, cyanelle</fullName>
    </alternativeName>
</protein>
<reference key="1">
    <citation type="journal article" date="1995" name="Plant Mol. Biol. Rep.">
        <title>Nucleotide sequence of the cyanelle DNA from Cyanophora paradoxa.</title>
        <authorList>
            <person name="Stirewalt V.L."/>
            <person name="Michalowski C.B."/>
            <person name="Loeffelhardt W."/>
            <person name="Bohnert H.J."/>
            <person name="Bryant D.A."/>
        </authorList>
    </citation>
    <scope>NUCLEOTIDE SEQUENCE [LARGE SCALE GENOMIC DNA]</scope>
    <source>
        <strain>UTEX LB 555 / Pringsheim</strain>
    </source>
</reference>
<reference key="2">
    <citation type="book" date="1997" name="Eukaryotism and symbiosis">
        <title>The complete sequence of the cyanelle genome of Cyanophora paradoxa: the genetic complexity of a primitive plastid.</title>
        <editorList>
            <person name="Schenk H.E.A."/>
            <person name="Herrmann R."/>
            <person name="Jeon K.W."/>
            <person name="Mueller N.E."/>
            <person name="Schwemmler W."/>
        </editorList>
        <authorList>
            <person name="Loeffelhardt W."/>
            <person name="Stirewalt V.L."/>
            <person name="Michalowski C.B."/>
            <person name="Annarella M."/>
            <person name="Farley J.Y."/>
            <person name="Schluchter W.M."/>
            <person name="Chung S."/>
            <person name="Newmann-Spallart C."/>
            <person name="Steiner J.M."/>
            <person name="Jakowitsch J."/>
            <person name="Bohnert H.J."/>
            <person name="Bryant D.A."/>
        </authorList>
    </citation>
    <scope>NUCLEOTIDE SEQUENCE [LARGE SCALE GENOMIC DNA]</scope>
    <source>
        <strain>UTEX LB 555 / Pringsheim</strain>
    </source>
</reference>
<dbReference type="EMBL" id="U30821">
    <property type="protein sequence ID" value="AAA81299.1"/>
    <property type="molecule type" value="Genomic_DNA"/>
</dbReference>
<dbReference type="PIR" id="T06956">
    <property type="entry name" value="T06956"/>
</dbReference>
<dbReference type="RefSeq" id="NP_043268.1">
    <property type="nucleotide sequence ID" value="NC_001675.1"/>
</dbReference>
<dbReference type="SMR" id="P48134"/>
<dbReference type="GeneID" id="801680"/>
<dbReference type="GO" id="GO:0009842">
    <property type="term" value="C:cyanelle"/>
    <property type="evidence" value="ECO:0007669"/>
    <property type="project" value="UniProtKB-SubCell"/>
</dbReference>
<dbReference type="GO" id="GO:1990904">
    <property type="term" value="C:ribonucleoprotein complex"/>
    <property type="evidence" value="ECO:0007669"/>
    <property type="project" value="UniProtKB-KW"/>
</dbReference>
<dbReference type="GO" id="GO:0005840">
    <property type="term" value="C:ribosome"/>
    <property type="evidence" value="ECO:0007669"/>
    <property type="project" value="UniProtKB-KW"/>
</dbReference>
<dbReference type="GO" id="GO:0070181">
    <property type="term" value="F:small ribosomal subunit rRNA binding"/>
    <property type="evidence" value="ECO:0007669"/>
    <property type="project" value="TreeGrafter"/>
</dbReference>
<dbReference type="GO" id="GO:0003735">
    <property type="term" value="F:structural constituent of ribosome"/>
    <property type="evidence" value="ECO:0007669"/>
    <property type="project" value="InterPro"/>
</dbReference>
<dbReference type="GO" id="GO:0006412">
    <property type="term" value="P:translation"/>
    <property type="evidence" value="ECO:0007669"/>
    <property type="project" value="InterPro"/>
</dbReference>
<dbReference type="Gene3D" id="3.30.70.60">
    <property type="match status" value="1"/>
</dbReference>
<dbReference type="HAMAP" id="MF_00360">
    <property type="entry name" value="Ribosomal_bS6"/>
    <property type="match status" value="1"/>
</dbReference>
<dbReference type="InterPro" id="IPR000529">
    <property type="entry name" value="Ribosomal_bS6"/>
</dbReference>
<dbReference type="InterPro" id="IPR020815">
    <property type="entry name" value="Ribosomal_bS6_CS"/>
</dbReference>
<dbReference type="InterPro" id="IPR035980">
    <property type="entry name" value="Ribosomal_bS6_sf"/>
</dbReference>
<dbReference type="InterPro" id="IPR020814">
    <property type="entry name" value="Ribosomal_S6_plastid/chlpt"/>
</dbReference>
<dbReference type="InterPro" id="IPR014717">
    <property type="entry name" value="Transl_elong_EF1B/ribsomal_bS6"/>
</dbReference>
<dbReference type="NCBIfam" id="TIGR00166">
    <property type="entry name" value="S6"/>
    <property type="match status" value="1"/>
</dbReference>
<dbReference type="PANTHER" id="PTHR21011">
    <property type="entry name" value="MITOCHONDRIAL 28S RIBOSOMAL PROTEIN S6"/>
    <property type="match status" value="1"/>
</dbReference>
<dbReference type="PANTHER" id="PTHR21011:SF1">
    <property type="entry name" value="SMALL RIBOSOMAL SUBUNIT PROTEIN BS6M"/>
    <property type="match status" value="1"/>
</dbReference>
<dbReference type="Pfam" id="PF01250">
    <property type="entry name" value="Ribosomal_S6"/>
    <property type="match status" value="1"/>
</dbReference>
<dbReference type="SUPFAM" id="SSF54995">
    <property type="entry name" value="Ribosomal protein S6"/>
    <property type="match status" value="1"/>
</dbReference>
<dbReference type="PROSITE" id="PS01048">
    <property type="entry name" value="RIBOSOMAL_S6"/>
    <property type="match status" value="1"/>
</dbReference>
<proteinExistence type="inferred from homology"/>
<evidence type="ECO:0000250" key="1"/>
<evidence type="ECO:0000305" key="2"/>
<sequence>MQVITLQKPSKKITYRTTYILKPSLTEEEITKEIEDYQKLLIDNGAEDIIIENTGKCRLAYLINKQNDGIYFQITYRGANTLVNILQRRMRLSINTLRYQTFKV</sequence>
<gene>
    <name type="primary">rps6</name>
</gene>
<keyword id="KW-0194">Cyanelle</keyword>
<keyword id="KW-0934">Plastid</keyword>
<keyword id="KW-0687">Ribonucleoprotein</keyword>
<keyword id="KW-0689">Ribosomal protein</keyword>
<keyword id="KW-0694">RNA-binding</keyword>
<keyword id="KW-0699">rRNA-binding</keyword>
<accession>P48134</accession>
<feature type="chain" id="PRO_0000176884" description="Small ribosomal subunit protein bS6c">
    <location>
        <begin position="1"/>
        <end position="104"/>
    </location>
</feature>
<organism>
    <name type="scientific">Cyanophora paradoxa</name>
    <dbReference type="NCBI Taxonomy" id="2762"/>
    <lineage>
        <taxon>Eukaryota</taxon>
        <taxon>Glaucocystophyceae</taxon>
        <taxon>Cyanophoraceae</taxon>
        <taxon>Cyanophora</taxon>
    </lineage>
</organism>
<geneLocation type="cyanelle"/>